<name>RS20_ECOUT</name>
<protein>
    <recommendedName>
        <fullName evidence="1">Small ribosomal subunit protein bS20</fullName>
    </recommendedName>
    <alternativeName>
        <fullName evidence="3">30S ribosomal protein S20</fullName>
    </alternativeName>
</protein>
<keyword id="KW-0687">Ribonucleoprotein</keyword>
<keyword id="KW-0689">Ribosomal protein</keyword>
<keyword id="KW-0694">RNA-binding</keyword>
<keyword id="KW-0699">rRNA-binding</keyword>
<reference key="1">
    <citation type="journal article" date="2006" name="Proc. Natl. Acad. Sci. U.S.A.">
        <title>Identification of genes subject to positive selection in uropathogenic strains of Escherichia coli: a comparative genomics approach.</title>
        <authorList>
            <person name="Chen S.L."/>
            <person name="Hung C.-S."/>
            <person name="Xu J."/>
            <person name="Reigstad C.S."/>
            <person name="Magrini V."/>
            <person name="Sabo A."/>
            <person name="Blasiar D."/>
            <person name="Bieri T."/>
            <person name="Meyer R.R."/>
            <person name="Ozersky P."/>
            <person name="Armstrong J.R."/>
            <person name="Fulton R.S."/>
            <person name="Latreille J.P."/>
            <person name="Spieth J."/>
            <person name="Hooton T.M."/>
            <person name="Mardis E.R."/>
            <person name="Hultgren S.J."/>
            <person name="Gordon J.I."/>
        </authorList>
    </citation>
    <scope>NUCLEOTIDE SEQUENCE [LARGE SCALE GENOMIC DNA]</scope>
    <source>
        <strain>UTI89 / UPEC</strain>
    </source>
</reference>
<feature type="chain" id="PRO_0000260117" description="Small ribosomal subunit protein bS20">
    <location>
        <begin position="1"/>
        <end position="87"/>
    </location>
</feature>
<feature type="region of interest" description="Disordered" evidence="2">
    <location>
        <begin position="1"/>
        <end position="26"/>
    </location>
</feature>
<proteinExistence type="inferred from homology"/>
<gene>
    <name evidence="1" type="primary">rpsT</name>
    <name type="ordered locus">UTI89_C0025</name>
</gene>
<sequence>MANIKSAKKRAIQSEKARKHNASRRSMMRTFIKKVYAAIEAGDKAAAQKAFNEMQPIVDRQAAKGLIHKNKAARHKANLTAQINKLA</sequence>
<dbReference type="EMBL" id="CP000243">
    <property type="protein sequence ID" value="ABE05535.1"/>
    <property type="molecule type" value="Genomic_DNA"/>
</dbReference>
<dbReference type="RefSeq" id="WP_001274021.1">
    <property type="nucleotide sequence ID" value="NZ_CP064825.1"/>
</dbReference>
<dbReference type="SMR" id="Q1RGH9"/>
<dbReference type="GeneID" id="93777413"/>
<dbReference type="KEGG" id="eci:UTI89_C0025"/>
<dbReference type="HOGENOM" id="CLU_160655_4_0_6"/>
<dbReference type="Proteomes" id="UP000001952">
    <property type="component" value="Chromosome"/>
</dbReference>
<dbReference type="GO" id="GO:0005829">
    <property type="term" value="C:cytosol"/>
    <property type="evidence" value="ECO:0007669"/>
    <property type="project" value="TreeGrafter"/>
</dbReference>
<dbReference type="GO" id="GO:0015935">
    <property type="term" value="C:small ribosomal subunit"/>
    <property type="evidence" value="ECO:0007669"/>
    <property type="project" value="TreeGrafter"/>
</dbReference>
<dbReference type="GO" id="GO:0070181">
    <property type="term" value="F:small ribosomal subunit rRNA binding"/>
    <property type="evidence" value="ECO:0007669"/>
    <property type="project" value="TreeGrafter"/>
</dbReference>
<dbReference type="GO" id="GO:0003735">
    <property type="term" value="F:structural constituent of ribosome"/>
    <property type="evidence" value="ECO:0007669"/>
    <property type="project" value="InterPro"/>
</dbReference>
<dbReference type="GO" id="GO:0006412">
    <property type="term" value="P:translation"/>
    <property type="evidence" value="ECO:0007669"/>
    <property type="project" value="UniProtKB-UniRule"/>
</dbReference>
<dbReference type="FunFam" id="1.20.58.110:FF:000001">
    <property type="entry name" value="30S ribosomal protein S20"/>
    <property type="match status" value="1"/>
</dbReference>
<dbReference type="Gene3D" id="1.20.58.110">
    <property type="entry name" value="Ribosomal protein S20"/>
    <property type="match status" value="1"/>
</dbReference>
<dbReference type="HAMAP" id="MF_00500">
    <property type="entry name" value="Ribosomal_bS20"/>
    <property type="match status" value="1"/>
</dbReference>
<dbReference type="InterPro" id="IPR002583">
    <property type="entry name" value="Ribosomal_bS20"/>
</dbReference>
<dbReference type="InterPro" id="IPR036510">
    <property type="entry name" value="Ribosomal_bS20_sf"/>
</dbReference>
<dbReference type="NCBIfam" id="TIGR00029">
    <property type="entry name" value="S20"/>
    <property type="match status" value="1"/>
</dbReference>
<dbReference type="PANTHER" id="PTHR33398">
    <property type="entry name" value="30S RIBOSOMAL PROTEIN S20"/>
    <property type="match status" value="1"/>
</dbReference>
<dbReference type="PANTHER" id="PTHR33398:SF1">
    <property type="entry name" value="SMALL RIBOSOMAL SUBUNIT PROTEIN BS20C"/>
    <property type="match status" value="1"/>
</dbReference>
<dbReference type="Pfam" id="PF01649">
    <property type="entry name" value="Ribosomal_S20p"/>
    <property type="match status" value="1"/>
</dbReference>
<dbReference type="SUPFAM" id="SSF46992">
    <property type="entry name" value="Ribosomal protein S20"/>
    <property type="match status" value="1"/>
</dbReference>
<comment type="function">
    <text evidence="1">Binds directly to 16S ribosomal RNA.</text>
</comment>
<comment type="similarity">
    <text evidence="1">Belongs to the bacterial ribosomal protein bS20 family.</text>
</comment>
<evidence type="ECO:0000255" key="1">
    <source>
        <dbReference type="HAMAP-Rule" id="MF_00500"/>
    </source>
</evidence>
<evidence type="ECO:0000256" key="2">
    <source>
        <dbReference type="SAM" id="MobiDB-lite"/>
    </source>
</evidence>
<evidence type="ECO:0000305" key="3"/>
<accession>Q1RGH9</accession>
<organism>
    <name type="scientific">Escherichia coli (strain UTI89 / UPEC)</name>
    <dbReference type="NCBI Taxonomy" id="364106"/>
    <lineage>
        <taxon>Bacteria</taxon>
        <taxon>Pseudomonadati</taxon>
        <taxon>Pseudomonadota</taxon>
        <taxon>Gammaproteobacteria</taxon>
        <taxon>Enterobacterales</taxon>
        <taxon>Enterobacteriaceae</taxon>
        <taxon>Escherichia</taxon>
    </lineage>
</organism>